<keyword id="KW-0002">3D-structure</keyword>
<keyword id="KW-0010">Activator</keyword>
<keyword id="KW-0156">Chromatin regulator</keyword>
<keyword id="KW-0158">Chromosome</keyword>
<keyword id="KW-0238">DNA-binding</keyword>
<keyword id="KW-0469">Meiosis</keyword>
<keyword id="KW-0479">Metal-binding</keyword>
<keyword id="KW-0488">Methylation</keyword>
<keyword id="KW-0489">Methyltransferase</keyword>
<keyword id="KW-0539">Nucleus</keyword>
<keyword id="KW-1185">Reference proteome</keyword>
<keyword id="KW-0677">Repeat</keyword>
<keyword id="KW-0949">S-adenosyl-L-methionine</keyword>
<keyword id="KW-0804">Transcription</keyword>
<keyword id="KW-0805">Transcription regulation</keyword>
<keyword id="KW-0808">Transferase</keyword>
<keyword id="KW-0862">Zinc</keyword>
<keyword id="KW-0863">Zinc-finger</keyword>
<proteinExistence type="evidence at protein level"/>
<gene>
    <name evidence="14" type="primary">PRDM9</name>
    <name type="synonym">PFM6</name>
</gene>
<name>PRDM9_HUMAN</name>
<evidence type="ECO:0000250" key="1">
    <source>
        <dbReference type="UniProtKB" id="Q96EQ9"/>
    </source>
</evidence>
<evidence type="ECO:0000255" key="2">
    <source>
        <dbReference type="PROSITE-ProRule" id="PRU00042"/>
    </source>
</evidence>
<evidence type="ECO:0000255" key="3">
    <source>
        <dbReference type="PROSITE-ProRule" id="PRU00120"/>
    </source>
</evidence>
<evidence type="ECO:0000255" key="4">
    <source>
        <dbReference type="PROSITE-ProRule" id="PRU00190"/>
    </source>
</evidence>
<evidence type="ECO:0000256" key="5">
    <source>
        <dbReference type="SAM" id="MobiDB-lite"/>
    </source>
</evidence>
<evidence type="ECO:0000269" key="6">
    <source>
    </source>
</evidence>
<evidence type="ECO:0000269" key="7">
    <source>
    </source>
</evidence>
<evidence type="ECO:0000269" key="8">
    <source>
    </source>
</evidence>
<evidence type="ECO:0000269" key="9">
    <source>
    </source>
</evidence>
<evidence type="ECO:0000269" key="10">
    <source>
    </source>
</evidence>
<evidence type="ECO:0000269" key="11">
    <source>
    </source>
</evidence>
<evidence type="ECO:0000269" key="12">
    <source ref="10"/>
</evidence>
<evidence type="ECO:0000305" key="13"/>
<evidence type="ECO:0000312" key="14">
    <source>
        <dbReference type="HGNC" id="HGNC:13994"/>
    </source>
</evidence>
<evidence type="ECO:0007744" key="15">
    <source>
        <dbReference type="PDB" id="4IJD"/>
    </source>
</evidence>
<evidence type="ECO:0007744" key="16">
    <source>
        <dbReference type="PDB" id="5EGB"/>
    </source>
</evidence>
<evidence type="ECO:0007744" key="17">
    <source>
        <dbReference type="PDB" id="5EH2"/>
    </source>
</evidence>
<evidence type="ECO:0007744" key="18">
    <source>
        <dbReference type="PDB" id="5EI9"/>
    </source>
</evidence>
<evidence type="ECO:0007744" key="19">
    <source>
        <dbReference type="PDB" id="6NM4"/>
    </source>
</evidence>
<evidence type="ECO:0007829" key="20">
    <source>
        <dbReference type="PDB" id="4IJD"/>
    </source>
</evidence>
<evidence type="ECO:0007829" key="21">
    <source>
        <dbReference type="PDB" id="5EI9"/>
    </source>
</evidence>
<evidence type="ECO:0007829" key="22">
    <source>
        <dbReference type="PDB" id="6NM4"/>
    </source>
</evidence>
<protein>
    <recommendedName>
        <fullName evidence="13">Histone-lysine N-methyltransferase PRDM9</fullName>
    </recommendedName>
    <alternativeName>
        <fullName>PR domain zinc finger protein 9</fullName>
    </alternativeName>
    <alternativeName>
        <fullName>PR domain-containing protein 9</fullName>
    </alternativeName>
    <alternativeName>
        <fullName evidence="1">Protein-lysine N-methyltransferase PRDM9</fullName>
        <ecNumber evidence="1">2.1.1.-</ecNumber>
    </alternativeName>
    <alternativeName>
        <fullName evidence="13">[histone H3]-lysine36 N-trimethyltransferase PRDM9</fullName>
        <ecNumber evidence="9">2.1.1.359</ecNumber>
    </alternativeName>
    <alternativeName>
        <fullName evidence="13">[histone H3]-lysine4 N-trimethyltransferase PRDM9</fullName>
        <ecNumber evidence="8 9 10">2.1.1.354</ecNumber>
    </alternativeName>
    <alternativeName>
        <fullName evidence="1">[histone H3]-lysine9 N-trimethyltransferase PRDM9</fullName>
        <ecNumber evidence="1">2.1.1.355</ecNumber>
    </alternativeName>
    <alternativeName>
        <fullName evidence="1">[histone H4]-N-methyl-L-lysine20 N-methyltransferase PRDM9</fullName>
        <ecNumber evidence="1">2.1.1.362</ecNumber>
    </alternativeName>
    <alternativeName>
        <fullName evidence="1">[histone H4]-lysine20 N-methyltransferase PRDM9</fullName>
        <ecNumber evidence="1">2.1.1.361</ecNumber>
    </alternativeName>
</protein>
<reference key="1">
    <citation type="submission" date="2006-02" db="EMBL/GenBank/DDBJ databases">
        <title>Cloning and characterization of PR domain-containing 9 (PRDM9).</title>
        <authorList>
            <person name="Ying J."/>
            <person name="Wong A.H.Y."/>
            <person name="Li H."/>
            <person name="Wang Y."/>
            <person name="Tao Q."/>
        </authorList>
    </citation>
    <scope>NUCLEOTIDE SEQUENCE [MRNA]</scope>
</reference>
<reference key="2">
    <citation type="journal article" date="2004" name="Nat. Genet.">
        <title>Complete sequencing and characterization of 21,243 full-length human cDNAs.</title>
        <authorList>
            <person name="Ota T."/>
            <person name="Suzuki Y."/>
            <person name="Nishikawa T."/>
            <person name="Otsuki T."/>
            <person name="Sugiyama T."/>
            <person name="Irie R."/>
            <person name="Wakamatsu A."/>
            <person name="Hayashi K."/>
            <person name="Sato H."/>
            <person name="Nagai K."/>
            <person name="Kimura K."/>
            <person name="Makita H."/>
            <person name="Sekine M."/>
            <person name="Obayashi M."/>
            <person name="Nishi T."/>
            <person name="Shibahara T."/>
            <person name="Tanaka T."/>
            <person name="Ishii S."/>
            <person name="Yamamoto J."/>
            <person name="Saito K."/>
            <person name="Kawai Y."/>
            <person name="Isono Y."/>
            <person name="Nakamura Y."/>
            <person name="Nagahari K."/>
            <person name="Murakami K."/>
            <person name="Yasuda T."/>
            <person name="Iwayanagi T."/>
            <person name="Wagatsuma M."/>
            <person name="Shiratori A."/>
            <person name="Sudo H."/>
            <person name="Hosoiri T."/>
            <person name="Kaku Y."/>
            <person name="Kodaira H."/>
            <person name="Kondo H."/>
            <person name="Sugawara M."/>
            <person name="Takahashi M."/>
            <person name="Kanda K."/>
            <person name="Yokoi T."/>
            <person name="Furuya T."/>
            <person name="Kikkawa E."/>
            <person name="Omura Y."/>
            <person name="Abe K."/>
            <person name="Kamihara K."/>
            <person name="Katsuta N."/>
            <person name="Sato K."/>
            <person name="Tanikawa M."/>
            <person name="Yamazaki M."/>
            <person name="Ninomiya K."/>
            <person name="Ishibashi T."/>
            <person name="Yamashita H."/>
            <person name="Murakawa K."/>
            <person name="Fujimori K."/>
            <person name="Tanai H."/>
            <person name="Kimata M."/>
            <person name="Watanabe M."/>
            <person name="Hiraoka S."/>
            <person name="Chiba Y."/>
            <person name="Ishida S."/>
            <person name="Ono Y."/>
            <person name="Takiguchi S."/>
            <person name="Watanabe S."/>
            <person name="Yosida M."/>
            <person name="Hotuta T."/>
            <person name="Kusano J."/>
            <person name="Kanehori K."/>
            <person name="Takahashi-Fujii A."/>
            <person name="Hara H."/>
            <person name="Tanase T.-O."/>
            <person name="Nomura Y."/>
            <person name="Togiya S."/>
            <person name="Komai F."/>
            <person name="Hara R."/>
            <person name="Takeuchi K."/>
            <person name="Arita M."/>
            <person name="Imose N."/>
            <person name="Musashino K."/>
            <person name="Yuuki H."/>
            <person name="Oshima A."/>
            <person name="Sasaki N."/>
            <person name="Aotsuka S."/>
            <person name="Yoshikawa Y."/>
            <person name="Matsunawa H."/>
            <person name="Ichihara T."/>
            <person name="Shiohata N."/>
            <person name="Sano S."/>
            <person name="Moriya S."/>
            <person name="Momiyama H."/>
            <person name="Satoh N."/>
            <person name="Takami S."/>
            <person name="Terashima Y."/>
            <person name="Suzuki O."/>
            <person name="Nakagawa S."/>
            <person name="Senoh A."/>
            <person name="Mizoguchi H."/>
            <person name="Goto Y."/>
            <person name="Shimizu F."/>
            <person name="Wakebe H."/>
            <person name="Hishigaki H."/>
            <person name="Watanabe T."/>
            <person name="Sugiyama A."/>
            <person name="Takemoto M."/>
            <person name="Kawakami B."/>
            <person name="Yamazaki M."/>
            <person name="Watanabe K."/>
            <person name="Kumagai A."/>
            <person name="Itakura S."/>
            <person name="Fukuzumi Y."/>
            <person name="Fujimori Y."/>
            <person name="Komiyama M."/>
            <person name="Tashiro H."/>
            <person name="Tanigami A."/>
            <person name="Fujiwara T."/>
            <person name="Ono T."/>
            <person name="Yamada K."/>
            <person name="Fujii Y."/>
            <person name="Ozaki K."/>
            <person name="Hirao M."/>
            <person name="Ohmori Y."/>
            <person name="Kawabata A."/>
            <person name="Hikiji T."/>
            <person name="Kobatake N."/>
            <person name="Inagaki H."/>
            <person name="Ikema Y."/>
            <person name="Okamoto S."/>
            <person name="Okitani R."/>
            <person name="Kawakami T."/>
            <person name="Noguchi S."/>
            <person name="Itoh T."/>
            <person name="Shigeta K."/>
            <person name="Senba T."/>
            <person name="Matsumura K."/>
            <person name="Nakajima Y."/>
            <person name="Mizuno T."/>
            <person name="Morinaga M."/>
            <person name="Sasaki M."/>
            <person name="Togashi T."/>
            <person name="Oyama M."/>
            <person name="Hata H."/>
            <person name="Watanabe M."/>
            <person name="Komatsu T."/>
            <person name="Mizushima-Sugano J."/>
            <person name="Satoh T."/>
            <person name="Shirai Y."/>
            <person name="Takahashi Y."/>
            <person name="Nakagawa K."/>
            <person name="Okumura K."/>
            <person name="Nagase T."/>
            <person name="Nomura N."/>
            <person name="Kikuchi H."/>
            <person name="Masuho Y."/>
            <person name="Yamashita R."/>
            <person name="Nakai K."/>
            <person name="Yada T."/>
            <person name="Nakamura Y."/>
            <person name="Ohara O."/>
            <person name="Isogai T."/>
            <person name="Sugano S."/>
        </authorList>
    </citation>
    <scope>NUCLEOTIDE SEQUENCE [LARGE SCALE MRNA] (ALLELE A)</scope>
    <source>
        <tissue>Testis</tissue>
    </source>
</reference>
<reference key="3">
    <citation type="journal article" date="2004" name="Nature">
        <title>The DNA sequence and comparative analysis of human chromosome 5.</title>
        <authorList>
            <person name="Schmutz J."/>
            <person name="Martin J."/>
            <person name="Terry A."/>
            <person name="Couronne O."/>
            <person name="Grimwood J."/>
            <person name="Lowry S."/>
            <person name="Gordon L.A."/>
            <person name="Scott D."/>
            <person name="Xie G."/>
            <person name="Huang W."/>
            <person name="Hellsten U."/>
            <person name="Tran-Gyamfi M."/>
            <person name="She X."/>
            <person name="Prabhakar S."/>
            <person name="Aerts A."/>
            <person name="Altherr M."/>
            <person name="Bajorek E."/>
            <person name="Black S."/>
            <person name="Branscomb E."/>
            <person name="Caoile C."/>
            <person name="Challacombe J.F."/>
            <person name="Chan Y.M."/>
            <person name="Denys M."/>
            <person name="Detter J.C."/>
            <person name="Escobar J."/>
            <person name="Flowers D."/>
            <person name="Fotopulos D."/>
            <person name="Glavina T."/>
            <person name="Gomez M."/>
            <person name="Gonzales E."/>
            <person name="Goodstein D."/>
            <person name="Grigoriev I."/>
            <person name="Groza M."/>
            <person name="Hammon N."/>
            <person name="Hawkins T."/>
            <person name="Haydu L."/>
            <person name="Israni S."/>
            <person name="Jett J."/>
            <person name="Kadner K."/>
            <person name="Kimball H."/>
            <person name="Kobayashi A."/>
            <person name="Lopez F."/>
            <person name="Lou Y."/>
            <person name="Martinez D."/>
            <person name="Medina C."/>
            <person name="Morgan J."/>
            <person name="Nandkeshwar R."/>
            <person name="Noonan J.P."/>
            <person name="Pitluck S."/>
            <person name="Pollard M."/>
            <person name="Predki P."/>
            <person name="Priest J."/>
            <person name="Ramirez L."/>
            <person name="Retterer J."/>
            <person name="Rodriguez A."/>
            <person name="Rogers S."/>
            <person name="Salamov A."/>
            <person name="Salazar A."/>
            <person name="Thayer N."/>
            <person name="Tice H."/>
            <person name="Tsai M."/>
            <person name="Ustaszewska A."/>
            <person name="Vo N."/>
            <person name="Wheeler J."/>
            <person name="Wu K."/>
            <person name="Yang J."/>
            <person name="Dickson M."/>
            <person name="Cheng J.-F."/>
            <person name="Eichler E.E."/>
            <person name="Olsen A."/>
            <person name="Pennacchio L.A."/>
            <person name="Rokhsar D.S."/>
            <person name="Richardson P."/>
            <person name="Lucas S.M."/>
            <person name="Myers R.M."/>
            <person name="Rubin E.M."/>
        </authorList>
    </citation>
    <scope>NUCLEOTIDE SEQUENCE [LARGE SCALE GENOMIC DNA] (ALLELE B)</scope>
</reference>
<reference key="4">
    <citation type="journal article" date="2000" name="Histol. Histopathol.">
        <title>The yin-yang of PR-domain family genes in tumorigenesis.</title>
        <authorList>
            <person name="Jiang G.L."/>
            <person name="Huang S."/>
        </authorList>
    </citation>
    <scope>NUCLEOTIDE SEQUENCE [MRNA] OF 205-894 (ALLELE B)</scope>
</reference>
<reference key="5">
    <citation type="journal article" date="2014" name="J. Biol. Chem.">
        <title>Trimethylation of histone H3 lysine 36 by human methyltransferase PRDM9 protein.</title>
        <authorList>
            <person name="Eram M.S."/>
            <person name="Bustos S.P."/>
            <person name="Lima-Fernandes E."/>
            <person name="Siarheyeva A."/>
            <person name="Senisterra G."/>
            <person name="Hajian T."/>
            <person name="Chau I."/>
            <person name="Duan S."/>
            <person name="Wu H."/>
            <person name="Dombrovski L."/>
            <person name="Schapira M."/>
            <person name="Arrowsmith C.H."/>
            <person name="Vedadi M."/>
        </authorList>
    </citation>
    <scope>CATALYTIC ACTIVITY</scope>
    <scope>FUNCTION</scope>
    <scope>BIOPHYSICOCHEMICAL PROPERTIES</scope>
    <scope>ACTIVITY REGULATION</scope>
</reference>
<reference key="6">
    <citation type="journal article" date="2016" name="J. Biol. Chem.">
        <title>PR Domain-containing Protein 7 (PRDM7) Is a Histone 3 Lysine 4 Trimethyltransferase.</title>
        <authorList>
            <person name="Blazer L.L."/>
            <person name="Lima-Fernandes E."/>
            <person name="Gibson E."/>
            <person name="Eram M.S."/>
            <person name="Loppnau P."/>
            <person name="Arrowsmith C.H."/>
            <person name="Schapira M."/>
            <person name="Vedadi M."/>
        </authorList>
    </citation>
    <scope>FUNCTION</scope>
    <scope>CATALYTIC ACTIVITY</scope>
    <scope>MUTAGENESIS OF TYR-357</scope>
</reference>
<reference key="7">
    <citation type="journal article" date="2008" name="J. Assist. Reprod. Genet.">
        <title>Two single nucleotide polymorphisms in PRDM9 (MEISETZ) gene may be a genetic risk factor for Japanese patients with azoospermia by meiotic arrest.</title>
        <authorList>
            <person name="Miyamoto T."/>
            <person name="Koh E."/>
            <person name="Sakugawa N."/>
            <person name="Sato H."/>
            <person name="Hayashi H."/>
            <person name="Namiki M."/>
            <person name="Sengoku K."/>
        </authorList>
    </citation>
    <scope>VARIANT HIS-335</scope>
</reference>
<reference evidence="15" key="8">
    <citation type="journal article" date="2013" name="Cell Rep.">
        <title>Molecular basis for the regulation of the H3K4 methyltransferase activity of PRDM9.</title>
        <authorList>
            <person name="Wu H."/>
            <person name="Mathioudakis N."/>
            <person name="Diagouraga B."/>
            <person name="Dong A."/>
            <person name="Dombrovski L."/>
            <person name="Baudat F."/>
            <person name="Cusack S."/>
            <person name="de Massy B."/>
            <person name="Kadlec J."/>
        </authorList>
    </citation>
    <scope>X-RAY CRYSTALLOGRAPHY (2.15 ANGSTROMS) OF 195-415 IN COMPLEX WITH ZINC</scope>
    <scope>MUTAGENESIS OF ASP-199 AND LYS-374</scope>
    <scope>FUNCTION</scope>
    <scope>CATALYTIC ACTIVITY</scope>
    <scope>SUBUNIT</scope>
</reference>
<reference evidence="16 17 18" key="9">
    <citation type="journal article" date="2016" name="Genes Dev.">
        <title>Structural basis for human PRDM9 action at recombination hot spots.</title>
        <authorList>
            <person name="Patel A."/>
            <person name="Horton J.R."/>
            <person name="Wilson G.G."/>
            <person name="Zhang X."/>
            <person name="Cheng X."/>
        </authorList>
    </citation>
    <scope>X-RAY CRYSTALLOGRAPHY (1.92 ANGSTROMS) OF 717-858 (ALLELE B) IN COMPLEX WITH ZINC AND DNA</scope>
    <scope>DNA-BINDING</scope>
    <scope>SUBUNIT</scope>
    <scope>CATALYTIC ACTIVITY</scope>
    <scope>REGION</scope>
    <scope>FUNCTION</scope>
    <scope>CHARACTERIZATION OF ALLELES L20; L13 AND L9/24</scope>
    <scope>POLYMORPHISM</scope>
</reference>
<reference evidence="19" key="10">
    <citation type="submission" date="2019-01" db="PDB data bank">
        <title>Crystal structure of SAM-bound PRDM9 in complex with MRK-740 inhibitor.</title>
        <authorList>
            <person name="Ivanochko D."/>
            <person name="Halabelian L."/>
            <person name="Fischer C."/>
            <person name="Sanders J.M."/>
            <person name="Kattar S.D."/>
            <person name="Brown P.J."/>
            <person name="Edwards A.M."/>
            <person name="Bountra C."/>
            <person name="Arrowsmith C.H."/>
        </authorList>
    </citation>
    <scope>X-RAY CRYSTALLOGRAPHY (2.58 ANGSTROMS) OF 195-385 IN COMPLEX WITH INHIBITOR; ZINC AND S-ADENOSYL-L-METHIONINE</scope>
    <scope>SUBUNIT</scope>
</reference>
<accession>Q9NQV7</accession>
<accession>B4DX22</accession>
<accession>Q27Q50</accession>
<organism>
    <name type="scientific">Homo sapiens</name>
    <name type="common">Human</name>
    <dbReference type="NCBI Taxonomy" id="9606"/>
    <lineage>
        <taxon>Eukaryota</taxon>
        <taxon>Metazoa</taxon>
        <taxon>Chordata</taxon>
        <taxon>Craniata</taxon>
        <taxon>Vertebrata</taxon>
        <taxon>Euteleostomi</taxon>
        <taxon>Mammalia</taxon>
        <taxon>Eutheria</taxon>
        <taxon>Euarchontoglires</taxon>
        <taxon>Primates</taxon>
        <taxon>Haplorrhini</taxon>
        <taxon>Catarrhini</taxon>
        <taxon>Hominidae</taxon>
        <taxon>Homo</taxon>
    </lineage>
</organism>
<comment type="function">
    <text evidence="1 8 9 10">Histone methyltransferase that sequentially mono-, di-, and tri-methylates both 'Lys-4' (H3K4) and 'Lys-36' (H3K36) of histone H3 to produce respectively trimethylated 'Lys-4' (H3K4me3) and trimethylated 'Lys-36' (H3K36me3) histone H3 and plays a key role in meiotic prophase by determining hotspot localization thereby promoting meiotic recombination (PubMed:24095733, PubMed:24634223, PubMed:26833727, PubMed:27129774). Can also methylate all four core histones with H3 being the best substrate and the most highly modified (PubMed:24095733, PubMed:24634223, PubMed:26833727). Is also able, on one hand, to mono and di-methylate H4K20 and on other hand to trimethylate H3K9 with the di-methylated H3K9 as the best substrate (By similarity). During meiotic prophase, binds specific DNA sequences through its zinc finger domains thereby determining hotspot localization where it promotes local H3K4me3 and H3K36me3 enrichment on the same nucleosomes through its histone methyltransferase activity (PubMed:26833727). Thereby promotes double-stranded breaks (DSB) formation, at this subset of PRDM9-binding sites, that initiates meiotic recombination for the proper meiotic progression (By similarity). During meiotic progression hotspot-bound PRDM9 interacts with several complexes; in early leptonema binds CDYL and EHMT2 followed by EWSR1 and CXXC1 by the end of leptonema. EWSR1 joins PRDM9 with the chromosomal axis through REC8 (By similarity). In this way, controls the DSB repair pathway, pairing of homologous chromosomes and sex body formation (By similarity). Moreover plays a central role in the transcriptional activation of genes during early meiotic prophase thanks to H3K4me3 and H3K36me3 enrichment that represents a specific tag for epigenetic transcriptional activation (By similarity). In addition performs automethylation (By similarity). Acetylation and phosphorylation of histone H3 attenuate or prevent histone H3 methylation (By similarity).</text>
</comment>
<comment type="catalytic activity">
    <reaction evidence="1">
        <text>L-lysyl-[protein] + S-adenosyl-L-methionine = N(6)-methyl-L-lysyl-[protein] + S-adenosyl-L-homocysteine + H(+)</text>
        <dbReference type="Rhea" id="RHEA:51736"/>
        <dbReference type="Rhea" id="RHEA-COMP:9752"/>
        <dbReference type="Rhea" id="RHEA-COMP:13053"/>
        <dbReference type="ChEBI" id="CHEBI:15378"/>
        <dbReference type="ChEBI" id="CHEBI:29969"/>
        <dbReference type="ChEBI" id="CHEBI:57856"/>
        <dbReference type="ChEBI" id="CHEBI:59789"/>
        <dbReference type="ChEBI" id="CHEBI:61929"/>
    </reaction>
    <physiologicalReaction direction="left-to-right" evidence="1">
        <dbReference type="Rhea" id="RHEA:51737"/>
    </physiologicalReaction>
</comment>
<comment type="catalytic activity">
    <reaction evidence="1">
        <text>N(6)-methyl-L-lysyl-[protein] + S-adenosyl-L-methionine = N(6),N(6)-dimethyl-L-lysyl-[protein] + S-adenosyl-L-homocysteine + H(+)</text>
        <dbReference type="Rhea" id="RHEA:54196"/>
        <dbReference type="Rhea" id="RHEA-COMP:13053"/>
        <dbReference type="Rhea" id="RHEA-COMP:13827"/>
        <dbReference type="ChEBI" id="CHEBI:15378"/>
        <dbReference type="ChEBI" id="CHEBI:57856"/>
        <dbReference type="ChEBI" id="CHEBI:59789"/>
        <dbReference type="ChEBI" id="CHEBI:61929"/>
        <dbReference type="ChEBI" id="CHEBI:61976"/>
    </reaction>
    <physiologicalReaction direction="left-to-right" evidence="1">
        <dbReference type="Rhea" id="RHEA:54197"/>
    </physiologicalReaction>
</comment>
<comment type="catalytic activity">
    <reaction evidence="8 9 10 11">
        <text>L-lysyl(4)-[histone H3] + 3 S-adenosyl-L-methionine = N(6),N(6),N(6)-trimethyl-L-lysyl(4)-[histone H3] + 3 S-adenosyl-L-homocysteine + 3 H(+)</text>
        <dbReference type="Rhea" id="RHEA:60260"/>
        <dbReference type="Rhea" id="RHEA-COMP:15537"/>
        <dbReference type="Rhea" id="RHEA-COMP:15547"/>
        <dbReference type="ChEBI" id="CHEBI:15378"/>
        <dbReference type="ChEBI" id="CHEBI:29969"/>
        <dbReference type="ChEBI" id="CHEBI:57856"/>
        <dbReference type="ChEBI" id="CHEBI:59789"/>
        <dbReference type="ChEBI" id="CHEBI:61961"/>
        <dbReference type="EC" id="2.1.1.354"/>
    </reaction>
    <physiologicalReaction direction="left-to-right" evidence="9 11">
        <dbReference type="Rhea" id="RHEA:60261"/>
    </physiologicalReaction>
</comment>
<comment type="catalytic activity">
    <reaction evidence="9 11">
        <text>L-lysyl(36)-[histone H3] + 3 S-adenosyl-L-methionine = N(6),N(6),N(6)-trimethyl-L-lysyl(36)-[histone H3] + 3 S-adenosyl-L-homocysteine + 3 H(+)</text>
        <dbReference type="Rhea" id="RHEA:60324"/>
        <dbReference type="Rhea" id="RHEA-COMP:9785"/>
        <dbReference type="Rhea" id="RHEA-COMP:15536"/>
        <dbReference type="ChEBI" id="CHEBI:15378"/>
        <dbReference type="ChEBI" id="CHEBI:29969"/>
        <dbReference type="ChEBI" id="CHEBI:57856"/>
        <dbReference type="ChEBI" id="CHEBI:59789"/>
        <dbReference type="ChEBI" id="CHEBI:61961"/>
        <dbReference type="EC" id="2.1.1.359"/>
    </reaction>
    <physiologicalReaction direction="left-to-right" evidence="9 11">
        <dbReference type="Rhea" id="RHEA:60325"/>
    </physiologicalReaction>
</comment>
<comment type="catalytic activity">
    <reaction evidence="1">
        <text>L-lysyl(9)-[histone H3] + 3 S-adenosyl-L-methionine = N(6),N(6),N(6)-trimethyl-L-lysyl(9)-[histone H3] + 3 S-adenosyl-L-homocysteine + 3 H(+)</text>
        <dbReference type="Rhea" id="RHEA:60276"/>
        <dbReference type="Rhea" id="RHEA-COMP:15538"/>
        <dbReference type="Rhea" id="RHEA-COMP:15546"/>
        <dbReference type="ChEBI" id="CHEBI:15378"/>
        <dbReference type="ChEBI" id="CHEBI:29969"/>
        <dbReference type="ChEBI" id="CHEBI:57856"/>
        <dbReference type="ChEBI" id="CHEBI:59789"/>
        <dbReference type="ChEBI" id="CHEBI:61961"/>
        <dbReference type="EC" id="2.1.1.355"/>
    </reaction>
    <physiologicalReaction direction="left-to-right" evidence="1">
        <dbReference type="Rhea" id="RHEA:60277"/>
    </physiologicalReaction>
</comment>
<comment type="catalytic activity">
    <reaction evidence="1">
        <text>L-lysyl(20)-[histone H4] + S-adenosyl-L-methionine = N(6)-methyl-L-lysyl(20)-[histone H4] + S-adenosyl-L-homocysteine + H(+)</text>
        <dbReference type="Rhea" id="RHEA:60344"/>
        <dbReference type="Rhea" id="RHEA-COMP:15554"/>
        <dbReference type="Rhea" id="RHEA-COMP:15555"/>
        <dbReference type="ChEBI" id="CHEBI:15378"/>
        <dbReference type="ChEBI" id="CHEBI:29969"/>
        <dbReference type="ChEBI" id="CHEBI:57856"/>
        <dbReference type="ChEBI" id="CHEBI:59789"/>
        <dbReference type="ChEBI" id="CHEBI:61929"/>
        <dbReference type="EC" id="2.1.1.361"/>
    </reaction>
    <physiologicalReaction direction="left-to-right" evidence="1">
        <dbReference type="Rhea" id="RHEA:60345"/>
    </physiologicalReaction>
</comment>
<comment type="catalytic activity">
    <reaction evidence="1">
        <text>N(6)-methyl-L-lysyl(20)-[histone H4] + S-adenosyl-L-methionine = N(6),N(6)-dimethyl-L-lysyl(20)-[histone H4] + S-adenosyl-L-homocysteine + H(+)</text>
        <dbReference type="Rhea" id="RHEA:60348"/>
        <dbReference type="Rhea" id="RHEA-COMP:15555"/>
        <dbReference type="Rhea" id="RHEA-COMP:15556"/>
        <dbReference type="ChEBI" id="CHEBI:15378"/>
        <dbReference type="ChEBI" id="CHEBI:57856"/>
        <dbReference type="ChEBI" id="CHEBI:59789"/>
        <dbReference type="ChEBI" id="CHEBI:61929"/>
        <dbReference type="ChEBI" id="CHEBI:61976"/>
        <dbReference type="EC" id="2.1.1.362"/>
    </reaction>
    <physiologicalReaction direction="left-to-right" evidence="1">
        <dbReference type="Rhea" id="RHEA:60349"/>
    </physiologicalReaction>
</comment>
<comment type="activity regulation">
    <text evidence="9">Inhibited by suramin with an IC(50) of 4.1 uM.</text>
</comment>
<comment type="biophysicochemical properties">
    <kinetics>
        <KM evidence="9">1 uM for H3K4me0</KM>
        <KM evidence="9">1 uM for H3K4me1</KM>
        <KM evidence="9">3 uM for H3K4me2</KM>
        <KM evidence="9">1.5 uM for H3K36me0</KM>
        <KM evidence="9">2.4 uM for H3K36me1</KM>
        <KM evidence="9">2.5 uM for H3K36me2</KM>
        <KM evidence="9">0.7 uM for native H3-H4 tetramer</KM>
        <KM evidence="9">120 uM for S-adenosyl-L-methionine (with H3K4me0 as substrate)</KM>
        <KM evidence="9">170 uM for S-adenosyl-L-methionine (with H3K4me1 as substrate)</KM>
        <KM evidence="9">140 uM for S-adenosyl-L-methionine (with H3K4me2 as substrate)</KM>
        <KM evidence="9">87 uM for S-adenosyl-L-methionine (with H3K36me0 as substrate)</KM>
        <KM evidence="9">130 uM for S-adenosyl-L-methionine (with H3K36me1 as substrate)</KM>
        <KM evidence="9">62 uM for S-adenosyl-L-methionine (with H3K36me2 as substrate)</KM>
        <KM evidence="9">240 uM for S-adenosyl-L-methionine (with native H3-H4 tetramer as substrate)</KM>
        <text evidence="9">All kinetic experiments are done with 10 mm Tris-HCl, 0.01% Triton X-100, and 10 mm DTT and at pH 8.5.</text>
    </kinetics>
    <phDependence>
        <text evidence="9">Optimum pH is 8.5.</text>
    </phDependence>
</comment>
<comment type="subunit">
    <text evidence="1 8 10 12">Homodimer (PubMed:24095733, PubMed:26833727, Ref.10). Interacts with EHMT2 and CDYL; interaction only takes place when PRDM9 is bound to hotspot DNA. Interacts with CXXC1; this interaction does not link PRDM9-activated recombination hotspot sites with DSB machinery and is not required for the hotspot recognition pathway. Forms a complex with EWSR1, REC8, SYCP3 and SYCP1; complex formation is dependent of phosphorylated form of REC8 and requires PRDM9 bound to hotspot DNA; EWSR1 joins PRDM9 with the chromosomal axis through REC8 (By similarity).</text>
</comment>
<comment type="subcellular location">
    <subcellularLocation>
        <location evidence="1">Nucleus</location>
    </subcellularLocation>
    <subcellularLocation>
        <location evidence="1">Chromosome</location>
    </subcellularLocation>
    <text evidence="1">Localizes in nuclei of pre-leptotene, leptotene, and early to mid-zygotene spermatocytes.</text>
</comment>
<comment type="domain">
    <text evidence="1">The C2H2-type zinc fingers determine the hotspot localization through its binding to specific DNA sequences. Variations in their sequence affect affinity towards DNA-binding motif.</text>
</comment>
<comment type="PTM">
    <text evidence="1">Mono-methylated; automethylated. Tri-methylated; automethylated. Mono-methylation is predominant; automethylation is lower and slower than H3 peptide methylation and is in a highest S-adenosyl-L-methionine concentration-dependent. There are two major sites for automethylation at Lys-368 and Lys-374. Lysines can be simultaneously methylated, such as Lys-368(me3)/Lys-372(me1), Lys-368(me1)/Lys-374(me1) and Lys-368(me1)/Lys-372(me1)/Lys-374(me1). Automethylation is an intramolecular (cis) process.</text>
</comment>
<comment type="polymorphism">
    <text evidence="10">Several alleles exist depending on both the number of zinc finger C2H2 type domains and their identity (PubMed:26833727). Each allele binds to a specific hotspot set (PubMed:26833727). Variations in the zinc finger C2H2 type domains are associated with significant differences in affinity towards DNA-binding motif (PubMed:26833727). The sequence shown is that of allele B.</text>
</comment>
<comment type="similarity">
    <text evidence="4">Belongs to the class V-like SAM-binding methyltransferase superfamily.</text>
</comment>
<comment type="sequence caution" evidence="13">
    <conflict type="erroneous initiation">
        <sequence resource="EMBL-CDS" id="AAF87242"/>
    </conflict>
</comment>
<dbReference type="EC" id="2.1.1.-" evidence="1"/>
<dbReference type="EC" id="2.1.1.359" evidence="9"/>
<dbReference type="EC" id="2.1.1.354" evidence="8 9 10"/>
<dbReference type="EC" id="2.1.1.355" evidence="1"/>
<dbReference type="EC" id="2.1.1.362" evidence="1"/>
<dbReference type="EC" id="2.1.1.361" evidence="1"/>
<dbReference type="EMBL" id="DQ388610">
    <property type="protein sequence ID" value="ABD47939.1"/>
    <property type="molecule type" value="mRNA"/>
</dbReference>
<dbReference type="EMBL" id="AK301776">
    <property type="protein sequence ID" value="BAG63234.1"/>
    <property type="molecule type" value="mRNA"/>
</dbReference>
<dbReference type="EMBL" id="AC025451">
    <property type="status" value="NOT_ANNOTATED_CDS"/>
    <property type="molecule type" value="Genomic_DNA"/>
</dbReference>
<dbReference type="EMBL" id="AF275816">
    <property type="protein sequence ID" value="AAF87242.1"/>
    <property type="status" value="ALT_INIT"/>
    <property type="molecule type" value="mRNA"/>
</dbReference>
<dbReference type="CCDS" id="CCDS43307.1"/>
<dbReference type="RefSeq" id="NP_001297143.1">
    <property type="nucleotide sequence ID" value="NM_001310214.1"/>
</dbReference>
<dbReference type="RefSeq" id="NP_001363829.1">
    <property type="nucleotide sequence ID" value="NM_001376900.1"/>
</dbReference>
<dbReference type="RefSeq" id="NP_064612.2">
    <property type="nucleotide sequence ID" value="NM_020227.4"/>
</dbReference>
<dbReference type="PDB" id="4IJD">
    <property type="method" value="X-ray"/>
    <property type="resolution" value="2.15 A"/>
    <property type="chains" value="A/B=195-415"/>
</dbReference>
<dbReference type="PDB" id="5EGB">
    <property type="method" value="X-ray"/>
    <property type="resolution" value="1.98 A"/>
    <property type="chains" value="A=717-858"/>
</dbReference>
<dbReference type="PDB" id="5EH2">
    <property type="method" value="X-ray"/>
    <property type="resolution" value="2.05 A"/>
    <property type="chains" value="E/F=717-858"/>
</dbReference>
<dbReference type="PDB" id="5EI9">
    <property type="method" value="X-ray"/>
    <property type="resolution" value="1.92 A"/>
    <property type="chains" value="E/F=717-858"/>
</dbReference>
<dbReference type="PDB" id="6NM4">
    <property type="method" value="X-ray"/>
    <property type="resolution" value="2.58 A"/>
    <property type="chains" value="A/B=195-385"/>
</dbReference>
<dbReference type="PDBsum" id="4IJD"/>
<dbReference type="PDBsum" id="5EGB"/>
<dbReference type="PDBsum" id="5EH2"/>
<dbReference type="PDBsum" id="5EI9"/>
<dbReference type="PDBsum" id="6NM4"/>
<dbReference type="SMR" id="Q9NQV7"/>
<dbReference type="BioGRID" id="121297">
    <property type="interactions" value="8"/>
</dbReference>
<dbReference type="FunCoup" id="Q9NQV7">
    <property type="interactions" value="260"/>
</dbReference>
<dbReference type="IntAct" id="Q9NQV7">
    <property type="interactions" value="6"/>
</dbReference>
<dbReference type="MINT" id="Q9NQV7"/>
<dbReference type="STRING" id="9606.ENSP00000296682"/>
<dbReference type="BindingDB" id="Q9NQV7"/>
<dbReference type="ChEMBL" id="CHEMBL3588737"/>
<dbReference type="GlyGen" id="Q9NQV7">
    <property type="glycosylation" value="1 site, 1 O-linked glycan (1 site)"/>
</dbReference>
<dbReference type="iPTMnet" id="Q9NQV7"/>
<dbReference type="PhosphoSitePlus" id="Q9NQV7"/>
<dbReference type="BioMuta" id="PRDM9"/>
<dbReference type="DMDM" id="212276459"/>
<dbReference type="jPOST" id="Q9NQV7"/>
<dbReference type="MassIVE" id="Q9NQV7"/>
<dbReference type="PaxDb" id="9606-ENSP00000296682"/>
<dbReference type="PeptideAtlas" id="Q9NQV7"/>
<dbReference type="ProteomicsDB" id="82198"/>
<dbReference type="Antibodypedia" id="22638">
    <property type="antibodies" value="93 antibodies from 23 providers"/>
</dbReference>
<dbReference type="DNASU" id="56979"/>
<dbReference type="Ensembl" id="ENST00000296682.4">
    <property type="protein sequence ID" value="ENSP00000296682.4"/>
    <property type="gene ID" value="ENSG00000164256.11"/>
</dbReference>
<dbReference type="Ensembl" id="ENST00000502755.6">
    <property type="protein sequence ID" value="ENSP00000425471.2"/>
    <property type="gene ID" value="ENSG00000164256.11"/>
</dbReference>
<dbReference type="GeneID" id="56979"/>
<dbReference type="KEGG" id="hsa:56979"/>
<dbReference type="MANE-Select" id="ENST00000296682.4">
    <property type="protein sequence ID" value="ENSP00000296682.4"/>
    <property type="RefSeq nucleotide sequence ID" value="NM_020227.4"/>
    <property type="RefSeq protein sequence ID" value="NP_064612.2"/>
</dbReference>
<dbReference type="UCSC" id="uc003jgo.3">
    <property type="organism name" value="human"/>
</dbReference>
<dbReference type="AGR" id="HGNC:13994"/>
<dbReference type="CTD" id="56979"/>
<dbReference type="DisGeNET" id="56979"/>
<dbReference type="GeneCards" id="PRDM9"/>
<dbReference type="HGNC" id="HGNC:13994">
    <property type="gene designation" value="PRDM9"/>
</dbReference>
<dbReference type="HPA" id="ENSG00000164256">
    <property type="expression patterns" value="Group enriched (epididymis, testis)"/>
</dbReference>
<dbReference type="MIM" id="609760">
    <property type="type" value="gene"/>
</dbReference>
<dbReference type="neXtProt" id="NX_Q9NQV7"/>
<dbReference type="OpenTargets" id="ENSG00000164256"/>
<dbReference type="PharmGKB" id="PA33721"/>
<dbReference type="VEuPathDB" id="HostDB:ENSG00000164256"/>
<dbReference type="eggNOG" id="KOG1721">
    <property type="taxonomic scope" value="Eukaryota"/>
</dbReference>
<dbReference type="eggNOG" id="KOG2461">
    <property type="taxonomic scope" value="Eukaryota"/>
</dbReference>
<dbReference type="GeneTree" id="ENSGT00940000163405"/>
<dbReference type="HOGENOM" id="CLU_002678_32_0_1"/>
<dbReference type="InParanoid" id="Q9NQV7"/>
<dbReference type="OMA" id="KRTWQRE"/>
<dbReference type="OrthoDB" id="9439903at2759"/>
<dbReference type="PAN-GO" id="Q9NQV7">
    <property type="GO annotations" value="6 GO annotations based on evolutionary models"/>
</dbReference>
<dbReference type="PhylomeDB" id="Q9NQV7"/>
<dbReference type="TreeFam" id="TF338096"/>
<dbReference type="BioCyc" id="MetaCyc:HS09047-MONOMER"/>
<dbReference type="BRENDA" id="2.1.1.359">
    <property type="organism ID" value="2681"/>
</dbReference>
<dbReference type="PathwayCommons" id="Q9NQV7"/>
<dbReference type="Reactome" id="R-HSA-3214841">
    <property type="pathway name" value="PKMTs methylate histone lysines"/>
</dbReference>
<dbReference type="Reactome" id="R-HSA-912446">
    <property type="pathway name" value="Meiotic recombination"/>
</dbReference>
<dbReference type="SignaLink" id="Q9NQV7"/>
<dbReference type="BioGRID-ORCS" id="56979">
    <property type="hits" value="18 hits in 1146 CRISPR screens"/>
</dbReference>
<dbReference type="EvolutionaryTrace" id="Q9NQV7"/>
<dbReference type="GeneWiki" id="PRDM9"/>
<dbReference type="GenomeRNAi" id="56979"/>
<dbReference type="Pharos" id="Q9NQV7">
    <property type="development level" value="Tbio"/>
</dbReference>
<dbReference type="PRO" id="PR:Q9NQV7"/>
<dbReference type="Proteomes" id="UP000005640">
    <property type="component" value="Chromosome 5"/>
</dbReference>
<dbReference type="RNAct" id="Q9NQV7">
    <property type="molecule type" value="protein"/>
</dbReference>
<dbReference type="Bgee" id="ENSG00000164256">
    <property type="expression patterns" value="Expressed in male germ line stem cell (sensu Vertebrata) in testis and 61 other cell types or tissues"/>
</dbReference>
<dbReference type="ExpressionAtlas" id="Q9NQV7">
    <property type="expression patterns" value="baseline and differential"/>
</dbReference>
<dbReference type="GO" id="GO:0005694">
    <property type="term" value="C:chromosome"/>
    <property type="evidence" value="ECO:0007669"/>
    <property type="project" value="UniProtKB-SubCell"/>
</dbReference>
<dbReference type="GO" id="GO:0005654">
    <property type="term" value="C:nucleoplasm"/>
    <property type="evidence" value="ECO:0000304"/>
    <property type="project" value="Reactome"/>
</dbReference>
<dbReference type="GO" id="GO:0005634">
    <property type="term" value="C:nucleus"/>
    <property type="evidence" value="ECO:0000250"/>
    <property type="project" value="UniProtKB"/>
</dbReference>
<dbReference type="GO" id="GO:0046975">
    <property type="term" value="F:histone H3K36 methyltransferase activity"/>
    <property type="evidence" value="ECO:0000315"/>
    <property type="project" value="UniProtKB"/>
</dbReference>
<dbReference type="GO" id="GO:0140955">
    <property type="term" value="F:histone H3K36 trimethyltransferase activity"/>
    <property type="evidence" value="ECO:0007669"/>
    <property type="project" value="UniProtKB-EC"/>
</dbReference>
<dbReference type="GO" id="GO:0042800">
    <property type="term" value="F:histone H3K4 methyltransferase activity"/>
    <property type="evidence" value="ECO:0000314"/>
    <property type="project" value="UniProtKB"/>
</dbReference>
<dbReference type="GO" id="GO:0140999">
    <property type="term" value="F:histone H3K4 trimethyltransferase activity"/>
    <property type="evidence" value="ECO:0007669"/>
    <property type="project" value="UniProtKB-EC"/>
</dbReference>
<dbReference type="GO" id="GO:0140949">
    <property type="term" value="F:histone H3K9 trimethyltransferase activity"/>
    <property type="evidence" value="ECO:0007669"/>
    <property type="project" value="UniProtKB-EC"/>
</dbReference>
<dbReference type="GO" id="GO:0140944">
    <property type="term" value="F:histone H4K20 monomethyltransferase activity"/>
    <property type="evidence" value="ECO:0007669"/>
    <property type="project" value="UniProtKB-EC"/>
</dbReference>
<dbReference type="GO" id="GO:0140941">
    <property type="term" value="F:histone H4K20me methyltransferase activity"/>
    <property type="evidence" value="ECO:0007669"/>
    <property type="project" value="UniProtKB-EC"/>
</dbReference>
<dbReference type="GO" id="GO:0042803">
    <property type="term" value="F:protein homodimerization activity"/>
    <property type="evidence" value="ECO:0000250"/>
    <property type="project" value="UniProtKB"/>
</dbReference>
<dbReference type="GO" id="GO:0010844">
    <property type="term" value="F:recombination hotspot binding"/>
    <property type="evidence" value="ECO:0000314"/>
    <property type="project" value="UniProtKB"/>
</dbReference>
<dbReference type="GO" id="GO:0000976">
    <property type="term" value="F:transcription cis-regulatory region binding"/>
    <property type="evidence" value="ECO:0000315"/>
    <property type="project" value="UniProtKB"/>
</dbReference>
<dbReference type="GO" id="GO:0008270">
    <property type="term" value="F:zinc ion binding"/>
    <property type="evidence" value="ECO:0007669"/>
    <property type="project" value="UniProtKB-KW"/>
</dbReference>
<dbReference type="GO" id="GO:1990918">
    <property type="term" value="P:double-strand break repair involved in meiotic recombination"/>
    <property type="evidence" value="ECO:0000250"/>
    <property type="project" value="UniProtKB"/>
</dbReference>
<dbReference type="GO" id="GO:0007292">
    <property type="term" value="P:female gamete generation"/>
    <property type="evidence" value="ECO:0000250"/>
    <property type="project" value="UniProtKB"/>
</dbReference>
<dbReference type="GO" id="GO:0007129">
    <property type="term" value="P:homologous chromosome pairing at meiosis"/>
    <property type="evidence" value="ECO:0000250"/>
    <property type="project" value="UniProtKB"/>
</dbReference>
<dbReference type="GO" id="GO:0048232">
    <property type="term" value="P:male gamete generation"/>
    <property type="evidence" value="ECO:0000250"/>
    <property type="project" value="UniProtKB"/>
</dbReference>
<dbReference type="GO" id="GO:0006311">
    <property type="term" value="P:meiotic gene conversion"/>
    <property type="evidence" value="ECO:0000314"/>
    <property type="project" value="MGI"/>
</dbReference>
<dbReference type="GO" id="GO:0032259">
    <property type="term" value="P:methylation"/>
    <property type="evidence" value="ECO:0007669"/>
    <property type="project" value="UniProtKB-KW"/>
</dbReference>
<dbReference type="GO" id="GO:0043066">
    <property type="term" value="P:negative regulation of apoptotic process"/>
    <property type="evidence" value="ECO:0000250"/>
    <property type="project" value="UniProtKB"/>
</dbReference>
<dbReference type="GO" id="GO:1905516">
    <property type="term" value="P:positive regulation of fertilization"/>
    <property type="evidence" value="ECO:0000250"/>
    <property type="project" value="UniProtKB"/>
</dbReference>
<dbReference type="GO" id="GO:0010845">
    <property type="term" value="P:positive regulation of reciprocal meiotic recombination"/>
    <property type="evidence" value="ECO:0000315"/>
    <property type="project" value="MGI"/>
</dbReference>
<dbReference type="GO" id="GO:0006355">
    <property type="term" value="P:regulation of DNA-templated transcription"/>
    <property type="evidence" value="ECO:0007669"/>
    <property type="project" value="InterPro"/>
</dbReference>
<dbReference type="GO" id="GO:0010468">
    <property type="term" value="P:regulation of gene expression"/>
    <property type="evidence" value="ECO:0000318"/>
    <property type="project" value="GO_Central"/>
</dbReference>
<dbReference type="CDD" id="cd07765">
    <property type="entry name" value="KRAB_A-box"/>
    <property type="match status" value="1"/>
</dbReference>
<dbReference type="CDD" id="cd19193">
    <property type="entry name" value="PR-SET_PRDM7_9"/>
    <property type="match status" value="1"/>
</dbReference>
<dbReference type="FunFam" id="3.30.160.60:FF:000601">
    <property type="entry name" value="Histone-lysine N-methyltransferase PRDM9"/>
    <property type="match status" value="12"/>
</dbReference>
<dbReference type="FunFam" id="3.30.160.60:FF:001312">
    <property type="entry name" value="Histone-lysine N-methyltransferase PRDM9"/>
    <property type="match status" value="1"/>
</dbReference>
<dbReference type="FunFam" id="3.30.160.60:FF:001840">
    <property type="entry name" value="Paternally-expressed gene 3 protein"/>
    <property type="match status" value="1"/>
</dbReference>
<dbReference type="FunFam" id="2.170.270.10:FF:000031">
    <property type="entry name" value="probable histone-lysine N-methyltransferase PRDM7"/>
    <property type="match status" value="1"/>
</dbReference>
<dbReference type="Gene3D" id="6.10.140.140">
    <property type="match status" value="1"/>
</dbReference>
<dbReference type="Gene3D" id="3.30.160.60">
    <property type="entry name" value="Classic Zinc Finger"/>
    <property type="match status" value="14"/>
</dbReference>
<dbReference type="Gene3D" id="2.170.270.10">
    <property type="entry name" value="SET domain"/>
    <property type="match status" value="1"/>
</dbReference>
<dbReference type="InterPro" id="IPR003655">
    <property type="entry name" value="aKRAB"/>
</dbReference>
<dbReference type="InterPro" id="IPR001909">
    <property type="entry name" value="KRAB"/>
</dbReference>
<dbReference type="InterPro" id="IPR036051">
    <property type="entry name" value="KRAB_dom_sf"/>
</dbReference>
<dbReference type="InterPro" id="IPR048414">
    <property type="entry name" value="PDRM9-like_Znf-C2H2"/>
</dbReference>
<dbReference type="InterPro" id="IPR044417">
    <property type="entry name" value="PRDM7_9_PR-SET"/>
</dbReference>
<dbReference type="InterPro" id="IPR001214">
    <property type="entry name" value="SET_dom"/>
</dbReference>
<dbReference type="InterPro" id="IPR046341">
    <property type="entry name" value="SET_dom_sf"/>
</dbReference>
<dbReference type="InterPro" id="IPR019041">
    <property type="entry name" value="SSXRD_motif"/>
</dbReference>
<dbReference type="InterPro" id="IPR036236">
    <property type="entry name" value="Znf_C2H2_sf"/>
</dbReference>
<dbReference type="InterPro" id="IPR013087">
    <property type="entry name" value="Znf_C2H2_type"/>
</dbReference>
<dbReference type="PANTHER" id="PTHR23235">
    <property type="entry name" value="KRUEPPEL-LIKE TRANSCRIPTION FACTOR"/>
    <property type="match status" value="1"/>
</dbReference>
<dbReference type="PANTHER" id="PTHR23235:SF142">
    <property type="entry name" value="ZINC FINGER PROTEIN 384"/>
    <property type="match status" value="1"/>
</dbReference>
<dbReference type="Pfam" id="PF01352">
    <property type="entry name" value="KRAB"/>
    <property type="match status" value="1"/>
</dbReference>
<dbReference type="Pfam" id="PF21549">
    <property type="entry name" value="PRDM2_PR"/>
    <property type="match status" value="1"/>
</dbReference>
<dbReference type="Pfam" id="PF09514">
    <property type="entry name" value="SSXRD"/>
    <property type="match status" value="1"/>
</dbReference>
<dbReference type="Pfam" id="PF00096">
    <property type="entry name" value="zf-C2H2"/>
    <property type="match status" value="12"/>
</dbReference>
<dbReference type="Pfam" id="PF21225">
    <property type="entry name" value="zf-C2H2_5"/>
    <property type="match status" value="1"/>
</dbReference>
<dbReference type="SMART" id="SM00349">
    <property type="entry name" value="KRAB"/>
    <property type="match status" value="1"/>
</dbReference>
<dbReference type="SMART" id="SM00355">
    <property type="entry name" value="ZnF_C2H2"/>
    <property type="match status" value="14"/>
</dbReference>
<dbReference type="SUPFAM" id="SSF57667">
    <property type="entry name" value="beta-beta-alpha zinc fingers"/>
    <property type="match status" value="7"/>
</dbReference>
<dbReference type="SUPFAM" id="SSF109640">
    <property type="entry name" value="KRAB domain (Kruppel-associated box)"/>
    <property type="match status" value="1"/>
</dbReference>
<dbReference type="SUPFAM" id="SSF82199">
    <property type="entry name" value="SET domain"/>
    <property type="match status" value="1"/>
</dbReference>
<dbReference type="PROSITE" id="PS50806">
    <property type="entry name" value="KRAB_RELATED"/>
    <property type="match status" value="1"/>
</dbReference>
<dbReference type="PROSITE" id="PS50280">
    <property type="entry name" value="SET"/>
    <property type="match status" value="1"/>
</dbReference>
<dbReference type="PROSITE" id="PS00028">
    <property type="entry name" value="ZINC_FINGER_C2H2_1"/>
    <property type="match status" value="13"/>
</dbReference>
<dbReference type="PROSITE" id="PS50157">
    <property type="entry name" value="ZINC_FINGER_C2H2_2"/>
    <property type="match status" value="14"/>
</dbReference>
<sequence>MSPEKSQEESPEEDTERTERKPMVKDAFKDISIYFTKEEWAEMGDWEKTRYRNVKRNYNALITIGLRATRPAFMCHRRQAIKLQVDDTEDSDEEWTPRQQVKPPWMALRVEQRKHQKGMPKASFSNESSLKELSRTANLLNASGSEQAQKPVSPSGEASTSGQHSRLKLELRKKETERKMYSLRERKGHAYKEVSEPQDDDYLYCEMCQNFFIDSCAAHGPPTFVKDSAVDKGHPNRSALSLPPGLRIGPSGIPQAGLGVWNEASDLPLGLHFGPYEGRITEDEEAANNGYSWLITKGRNCYEYVDGKDKSWANWMRYVNCARDDEEQNLVAFQYHRQIFYRTCRVIRPGCELLVWYGDEYGQELGIKWGSKWKKELMAGREPKPEIHPCPSCCLAFSSQKFLSQHVERNHSSQNFPGPSARKLLQPENPCPGDQNQEQQYPDPHSRNDKTKGQEIKERSKLLNKRTWQREISRAFSSPPKGQMGSCRVGKRIMEEESRTGQKVNPGNTGKLFVGVGISRIAKVKYGECGQGFSVKSDVITHQRTHTGEKLYVCRECGRGFSWKSHLLIHQRIHTGEKPYVCRECGRGFSWQSVLLTHQRTHTGEKPYVCRECGRGFSRQSVLLTHQRRHTGEKPYVCRECGRGFSRQSVLLTHQRRHTGEKPYVCRECGRGFSWQSVLLTHQRTHTGEKPYVCRECGRGFSWQSVLLTHQRTHTGEKPYVCRECGRGFSNKSHLLRHQRTHTGEKPYVCRECGRGFRDKSHLLRHQRTHTGEKPYVCRECGRGFRDKSNLLSHQRTHTGEKPYVCRECGRGFSNKSHLLRHQRTHTGEKPYVCRECGRGFRNKSHLLRHQRTHTGEKPYVCRECGRGFSDRSSLCYHQRTHTGEKPYVCREDE</sequence>
<feature type="chain" id="PRO_0000047766" description="Histone-lysine N-methyltransferase PRDM9">
    <location>
        <begin position="1"/>
        <end position="894"/>
    </location>
</feature>
<feature type="domain" description="KRAB-related" evidence="3">
    <location>
        <begin position="23"/>
        <end position="86"/>
    </location>
</feature>
<feature type="domain" description="SET" evidence="4">
    <location>
        <begin position="244"/>
        <end position="358"/>
    </location>
</feature>
<feature type="zinc finger region" description="C2H2-type 1" evidence="2">
    <location>
        <begin position="388"/>
        <end position="411"/>
    </location>
</feature>
<feature type="zinc finger region" description="C2H2-type 2; degenerate" evidence="2">
    <location>
        <begin position="524"/>
        <end position="546"/>
    </location>
</feature>
<feature type="zinc finger region" description="C2H2-type 3" evidence="2">
    <location>
        <begin position="552"/>
        <end position="574"/>
    </location>
</feature>
<feature type="zinc finger region" description="C2H2-type 4" evidence="2">
    <location>
        <begin position="580"/>
        <end position="602"/>
    </location>
</feature>
<feature type="zinc finger region" description="C2H2-type 5" evidence="2">
    <location>
        <begin position="608"/>
        <end position="630"/>
    </location>
</feature>
<feature type="zinc finger region" description="C2H2-type 6" evidence="2">
    <location>
        <begin position="636"/>
        <end position="658"/>
    </location>
</feature>
<feature type="zinc finger region" description="C2H2-type 7" evidence="2">
    <location>
        <begin position="664"/>
        <end position="686"/>
    </location>
</feature>
<feature type="zinc finger region" description="C2H2-type 8" evidence="2">
    <location>
        <begin position="692"/>
        <end position="714"/>
    </location>
</feature>
<feature type="zinc finger region" description="C2H2-type 9" evidence="2">
    <location>
        <begin position="720"/>
        <end position="742"/>
    </location>
</feature>
<feature type="zinc finger region" description="C2H2-type 10" evidence="2">
    <location>
        <begin position="748"/>
        <end position="770"/>
    </location>
</feature>
<feature type="zinc finger region" description="C2H2-type 11" evidence="2">
    <location>
        <begin position="776"/>
        <end position="798"/>
    </location>
</feature>
<feature type="zinc finger region" description="C2H2-type 12" evidence="2">
    <location>
        <begin position="804"/>
        <end position="826"/>
    </location>
</feature>
<feature type="zinc finger region" description="C2H2-type 13" evidence="2">
    <location>
        <begin position="832"/>
        <end position="854"/>
    </location>
</feature>
<feature type="zinc finger region" description="C2H2-type 14" evidence="2">
    <location>
        <begin position="860"/>
        <end position="882"/>
    </location>
</feature>
<feature type="region of interest" description="Disordered" evidence="5">
    <location>
        <begin position="1"/>
        <end position="23"/>
    </location>
</feature>
<feature type="region of interest" description="Disordered" evidence="5">
    <location>
        <begin position="143"/>
        <end position="174"/>
    </location>
</feature>
<feature type="region of interest" description="Disordered" evidence="5">
    <location>
        <begin position="408"/>
        <end position="469"/>
    </location>
</feature>
<feature type="region of interest" description="DNA-binding" evidence="10">
    <location>
        <begin position="730"/>
        <end position="820"/>
    </location>
</feature>
<feature type="compositionally biased region" description="Polar residues" evidence="5">
    <location>
        <begin position="143"/>
        <end position="164"/>
    </location>
</feature>
<feature type="compositionally biased region" description="Basic and acidic residues" evidence="5">
    <location>
        <begin position="444"/>
        <end position="461"/>
    </location>
</feature>
<feature type="binding site" evidence="8 12 15 19">
    <location>
        <position position="205"/>
    </location>
    <ligand>
        <name>Zn(2+)</name>
        <dbReference type="ChEBI" id="CHEBI:29105"/>
        <label>1</label>
    </ligand>
</feature>
<feature type="binding site" evidence="8 12 15 19">
    <location>
        <position position="208"/>
    </location>
    <ligand>
        <name>Zn(2+)</name>
        <dbReference type="ChEBI" id="CHEBI:29105"/>
        <label>1</label>
    </ligand>
</feature>
<feature type="binding site" evidence="8 12 15 19">
    <location>
        <position position="216"/>
    </location>
    <ligand>
        <name>Zn(2+)</name>
        <dbReference type="ChEBI" id="CHEBI:29105"/>
        <label>1</label>
    </ligand>
</feature>
<feature type="binding site" evidence="8 12 15 19">
    <location>
        <position position="219"/>
    </location>
    <ligand>
        <name>Zn(2+)</name>
        <dbReference type="ChEBI" id="CHEBI:29105"/>
        <label>1</label>
    </ligand>
</feature>
<feature type="binding site" evidence="12">
    <location>
        <begin position="256"/>
        <end position="258"/>
    </location>
    <ligand>
        <name>S-adenosyl-L-methionine</name>
        <dbReference type="ChEBI" id="CHEBI:59789"/>
    </ligand>
</feature>
<feature type="binding site" evidence="1">
    <location>
        <begin position="288"/>
        <end position="294"/>
    </location>
    <ligand>
        <name>substrate</name>
    </ligand>
</feature>
<feature type="binding site" evidence="12">
    <location>
        <position position="291"/>
    </location>
    <ligand>
        <name>S-adenosyl-L-methionine</name>
        <dbReference type="ChEBI" id="CHEBI:59789"/>
    </ligand>
</feature>
<feature type="binding site" evidence="12">
    <location>
        <begin position="320"/>
        <end position="321"/>
    </location>
    <ligand>
        <name>S-adenosyl-L-methionine</name>
        <dbReference type="ChEBI" id="CHEBI:59789"/>
    </ligand>
</feature>
<feature type="binding site" evidence="1">
    <location>
        <position position="357"/>
    </location>
    <ligand>
        <name>substrate</name>
    </ligand>
</feature>
<feature type="binding site" evidence="8 15">
    <location>
        <position position="390"/>
    </location>
    <ligand>
        <name>Zn(2+)</name>
        <dbReference type="ChEBI" id="CHEBI:29105"/>
        <label>2</label>
    </ligand>
</feature>
<feature type="binding site" evidence="8 15">
    <location>
        <position position="393"/>
    </location>
    <ligand>
        <name>Zn(2+)</name>
        <dbReference type="ChEBI" id="CHEBI:29105"/>
        <label>2</label>
    </ligand>
</feature>
<feature type="binding site" evidence="8 15">
    <location>
        <position position="406"/>
    </location>
    <ligand>
        <name>Zn(2+)</name>
        <dbReference type="ChEBI" id="CHEBI:29105"/>
        <label>2</label>
    </ligand>
</feature>
<feature type="binding site" evidence="8 15">
    <location>
        <position position="411"/>
    </location>
    <ligand>
        <name>Zn(2+)</name>
        <dbReference type="ChEBI" id="CHEBI:29105"/>
        <label>2</label>
    </ligand>
</feature>
<feature type="binding site" evidence="10 16 17 18">
    <location>
        <position position="722"/>
    </location>
    <ligand>
        <name>Zn(2+)</name>
        <dbReference type="ChEBI" id="CHEBI:29105"/>
        <label>3</label>
    </ligand>
</feature>
<feature type="binding site" evidence="10 16 17 18">
    <location>
        <position position="725"/>
    </location>
    <ligand>
        <name>Zn(2+)</name>
        <dbReference type="ChEBI" id="CHEBI:29105"/>
        <label>3</label>
    </ligand>
</feature>
<feature type="binding site" evidence="10 16 17 18">
    <location>
        <position position="738"/>
    </location>
    <ligand>
        <name>Zn(2+)</name>
        <dbReference type="ChEBI" id="CHEBI:29105"/>
        <label>3</label>
    </ligand>
</feature>
<feature type="binding site" evidence="10 16 17 18">
    <location>
        <position position="742"/>
    </location>
    <ligand>
        <name>Zn(2+)</name>
        <dbReference type="ChEBI" id="CHEBI:29105"/>
        <label>3</label>
    </ligand>
</feature>
<feature type="binding site" evidence="10 16 17 18">
    <location>
        <position position="750"/>
    </location>
    <ligand>
        <name>Zn(2+)</name>
        <dbReference type="ChEBI" id="CHEBI:29105"/>
        <label>4</label>
    </ligand>
</feature>
<feature type="binding site" evidence="10 16 17 18">
    <location>
        <position position="753"/>
    </location>
    <ligand>
        <name>Zn(2+)</name>
        <dbReference type="ChEBI" id="CHEBI:29105"/>
        <label>4</label>
    </ligand>
</feature>
<feature type="binding site" evidence="10 16 17 18">
    <location>
        <position position="766"/>
    </location>
    <ligand>
        <name>Zn(2+)</name>
        <dbReference type="ChEBI" id="CHEBI:29105"/>
        <label>4</label>
    </ligand>
</feature>
<feature type="binding site" evidence="10 16 17 18">
    <location>
        <position position="770"/>
    </location>
    <ligand>
        <name>Zn(2+)</name>
        <dbReference type="ChEBI" id="CHEBI:29105"/>
        <label>4</label>
    </ligand>
</feature>
<feature type="binding site" evidence="10 16 17 18">
    <location>
        <position position="778"/>
    </location>
    <ligand>
        <name>Zn(2+)</name>
        <dbReference type="ChEBI" id="CHEBI:29105"/>
        <label>5</label>
    </ligand>
</feature>
<feature type="binding site" evidence="10 16 17 18">
    <location>
        <position position="781"/>
    </location>
    <ligand>
        <name>Zn(2+)</name>
        <dbReference type="ChEBI" id="CHEBI:29105"/>
        <label>5</label>
    </ligand>
</feature>
<feature type="binding site" evidence="10 16 17 18">
    <location>
        <position position="794"/>
    </location>
    <ligand>
        <name>Zn(2+)</name>
        <dbReference type="ChEBI" id="CHEBI:29105"/>
        <label>5</label>
    </ligand>
</feature>
<feature type="binding site" evidence="10 16 17 18">
    <location>
        <position position="798"/>
    </location>
    <ligand>
        <name>Zn(2+)</name>
        <dbReference type="ChEBI" id="CHEBI:29105"/>
        <label>5</label>
    </ligand>
</feature>
<feature type="binding site" evidence="10 16 17 18">
    <location>
        <position position="806"/>
    </location>
    <ligand>
        <name>Zn(2+)</name>
        <dbReference type="ChEBI" id="CHEBI:29105"/>
        <label>6</label>
    </ligand>
</feature>
<feature type="binding site" evidence="10 16 17 18">
    <location>
        <position position="809"/>
    </location>
    <ligand>
        <name>Zn(2+)</name>
        <dbReference type="ChEBI" id="CHEBI:29105"/>
        <label>6</label>
    </ligand>
</feature>
<feature type="binding site" evidence="10 16 17 18">
    <location>
        <position position="822"/>
    </location>
    <ligand>
        <name>Zn(2+)</name>
        <dbReference type="ChEBI" id="CHEBI:29105"/>
        <label>6</label>
    </ligand>
</feature>
<feature type="binding site" evidence="10 16 17 18">
    <location>
        <position position="826"/>
    </location>
    <ligand>
        <name>Zn(2+)</name>
        <dbReference type="ChEBI" id="CHEBI:29105"/>
        <label>6</label>
    </ligand>
</feature>
<feature type="modified residue" description="N6,N6,N6-trimethyllysine; alternate" evidence="1">
    <location>
        <position position="368"/>
    </location>
</feature>
<feature type="modified residue" description="N6-methyllysine; alternate" evidence="1">
    <location>
        <position position="368"/>
    </location>
</feature>
<feature type="modified residue" description="N6-methyllysine" evidence="1">
    <location>
        <position position="372"/>
    </location>
</feature>
<feature type="modified residue" description="N6-methyllysine" evidence="1">
    <location>
        <position position="374"/>
    </location>
</feature>
<feature type="sequence variant" id="VAR_054417" description="Found in patients with azoospermia caused by meiotic arrest; uncertain significance." evidence="7">
    <original>Y</original>
    <variation>H</variation>
    <location>
        <position position="335"/>
    </location>
</feature>
<feature type="sequence variant" id="VAR_082281" description="In allele A; dbSNP:rs6875787." evidence="6">
    <original>T</original>
    <variation>S</variation>
    <location>
        <position position="681"/>
    </location>
</feature>
<feature type="sequence variant" id="VAR_082282" description="In allele L9/24; significantly reduces affinity for the DNA-binding motif 5'-GCCTCCCTAGCCACG-3'; dbSNP:rs146505774." evidence="10">
    <original>K</original>
    <variation>E</variation>
    <location>
        <position position="788"/>
    </location>
</feature>
<feature type="sequence variant" id="VAR_082283" description="In allele L20; reduces affinity for the DNA-binding motif 5?-GCCTCCCTAGCCACG-3'; dbSNP:rs77287813." evidence="10">
    <original>N</original>
    <variation>H</variation>
    <location>
        <position position="790"/>
    </location>
</feature>
<feature type="sequence variant" id="VAR_082284" description="In allele L13; Increases affinity for the DNA-binding motif 5'-GCCTCCCTAGCCACG-3'; dbSNP:rs1445421439 and dbSNP:rs61051796." evidence="10">
    <original>S</original>
    <variation>R</variation>
    <location>
        <position position="814"/>
    </location>
</feature>
<feature type="mutagenesis site" description="Increases histone-lysine N-methyltransferase activity; when associated with D-374." evidence="8">
    <original>D</original>
    <variation>Y</variation>
    <location>
        <position position="199"/>
    </location>
</feature>
<feature type="mutagenesis site" description="Loss of histone-lysine N-methyltransferase activity." evidence="11">
    <original>Y</original>
    <variation>S</variation>
    <location>
        <position position="357"/>
    </location>
</feature>
<feature type="mutagenesis site" description="Increases histone-lysine N-methyltransferase activity; when associated with Y-199." evidence="8">
    <original>K</original>
    <variation>D</variation>
    <location>
        <position position="374"/>
    </location>
</feature>
<feature type="sequence conflict" description="In Ref. 4; AAF87242." evidence="13" ref="4">
    <original>I</original>
    <variation>VRRACHF</variation>
    <location>
        <position position="295"/>
    </location>
</feature>
<feature type="sequence conflict" description="In Ref. 4; AAF87242." evidence="13" ref="4">
    <location>
        <begin position="377"/>
        <end position="381"/>
    </location>
</feature>
<feature type="helix" evidence="20">
    <location>
        <begin position="199"/>
        <end position="201"/>
    </location>
</feature>
<feature type="strand" evidence="20">
    <location>
        <begin position="203"/>
        <end position="205"/>
    </location>
</feature>
<feature type="turn" evidence="20">
    <location>
        <begin position="206"/>
        <end position="209"/>
    </location>
</feature>
<feature type="strand" evidence="20">
    <location>
        <begin position="210"/>
        <end position="216"/>
    </location>
</feature>
<feature type="turn" evidence="20">
    <location>
        <begin position="217"/>
        <end position="219"/>
    </location>
</feature>
<feature type="strand" evidence="22">
    <location>
        <begin position="223"/>
        <end position="225"/>
    </location>
</feature>
<feature type="helix" evidence="20">
    <location>
        <begin position="237"/>
        <end position="240"/>
    </location>
</feature>
<feature type="strand" evidence="20">
    <location>
        <begin position="246"/>
        <end position="250"/>
    </location>
</feature>
<feature type="strand" evidence="20">
    <location>
        <begin position="258"/>
        <end position="262"/>
    </location>
</feature>
<feature type="strand" evidence="22">
    <location>
        <begin position="271"/>
        <end position="273"/>
    </location>
</feature>
<feature type="strand" evidence="20">
    <location>
        <begin position="278"/>
        <end position="281"/>
    </location>
</feature>
<feature type="helix" evidence="20">
    <location>
        <begin position="284"/>
        <end position="286"/>
    </location>
</feature>
<feature type="strand" evidence="20">
    <location>
        <begin position="289"/>
        <end position="298"/>
    </location>
</feature>
<feature type="strand" evidence="20">
    <location>
        <begin position="301"/>
        <end position="306"/>
    </location>
</feature>
<feature type="turn" evidence="20">
    <location>
        <begin position="310"/>
        <end position="312"/>
    </location>
</feature>
<feature type="helix" evidence="20">
    <location>
        <begin position="315"/>
        <end position="318"/>
    </location>
</feature>
<feature type="turn" evidence="20">
    <location>
        <begin position="325"/>
        <end position="327"/>
    </location>
</feature>
<feature type="strand" evidence="20">
    <location>
        <begin position="330"/>
        <end position="335"/>
    </location>
</feature>
<feature type="strand" evidence="20">
    <location>
        <begin position="338"/>
        <end position="345"/>
    </location>
</feature>
<feature type="strand" evidence="20">
    <location>
        <begin position="354"/>
        <end position="356"/>
    </location>
</feature>
<feature type="helix" evidence="20">
    <location>
        <begin position="362"/>
        <end position="367"/>
    </location>
</feature>
<feature type="turn" evidence="20">
    <location>
        <begin position="368"/>
        <end position="370"/>
    </location>
</feature>
<feature type="helix" evidence="20">
    <location>
        <begin position="373"/>
        <end position="377"/>
    </location>
</feature>
<feature type="strand" evidence="20">
    <location>
        <begin position="391"/>
        <end position="394"/>
    </location>
</feature>
<feature type="strand" evidence="20">
    <location>
        <begin position="396"/>
        <end position="399"/>
    </location>
</feature>
<feature type="helix" evidence="20">
    <location>
        <begin position="400"/>
        <end position="410"/>
    </location>
</feature>
<feature type="turn" evidence="21">
    <location>
        <begin position="723"/>
        <end position="725"/>
    </location>
</feature>
<feature type="strand" evidence="21">
    <location>
        <begin position="728"/>
        <end position="731"/>
    </location>
</feature>
<feature type="helix" evidence="21">
    <location>
        <begin position="732"/>
        <end position="743"/>
    </location>
</feature>
<feature type="turn" evidence="21">
    <location>
        <begin position="751"/>
        <end position="753"/>
    </location>
</feature>
<feature type="strand" evidence="21">
    <location>
        <begin position="756"/>
        <end position="759"/>
    </location>
</feature>
<feature type="helix" evidence="21">
    <location>
        <begin position="760"/>
        <end position="765"/>
    </location>
</feature>
<feature type="helix" evidence="21">
    <location>
        <begin position="768"/>
        <end position="771"/>
    </location>
</feature>
<feature type="turn" evidence="21">
    <location>
        <begin position="779"/>
        <end position="781"/>
    </location>
</feature>
<feature type="strand" evidence="21">
    <location>
        <begin position="784"/>
        <end position="787"/>
    </location>
</feature>
<feature type="helix" evidence="21">
    <location>
        <begin position="788"/>
        <end position="799"/>
    </location>
</feature>
<feature type="turn" evidence="21">
    <location>
        <begin position="807"/>
        <end position="809"/>
    </location>
</feature>
<feature type="strand" evidence="21">
    <location>
        <begin position="812"/>
        <end position="815"/>
    </location>
</feature>
<feature type="helix" evidence="21">
    <location>
        <begin position="816"/>
        <end position="823"/>
    </location>
</feature>
<feature type="turn" evidence="21">
    <location>
        <begin position="824"/>
        <end position="826"/>
    </location>
</feature>